<keyword id="KW-0687">Ribonucleoprotein</keyword>
<keyword id="KW-0689">Ribosomal protein</keyword>
<keyword id="KW-0694">RNA-binding</keyword>
<keyword id="KW-0699">rRNA-binding</keyword>
<gene>
    <name evidence="1" type="primary">rpsD</name>
    <name type="ordered locus">UTI89_C3741</name>
</gene>
<accession>Q1R636</accession>
<dbReference type="EMBL" id="CP000243">
    <property type="protein sequence ID" value="ABE09178.1"/>
    <property type="molecule type" value="Genomic_DNA"/>
</dbReference>
<dbReference type="RefSeq" id="WP_000135224.1">
    <property type="nucleotide sequence ID" value="NZ_CP064825.1"/>
</dbReference>
<dbReference type="SMR" id="Q1R636"/>
<dbReference type="GeneID" id="93778691"/>
<dbReference type="KEGG" id="eci:UTI89_C3741"/>
<dbReference type="HOGENOM" id="CLU_092403_0_2_6"/>
<dbReference type="Proteomes" id="UP000001952">
    <property type="component" value="Chromosome"/>
</dbReference>
<dbReference type="GO" id="GO:0015935">
    <property type="term" value="C:small ribosomal subunit"/>
    <property type="evidence" value="ECO:0007669"/>
    <property type="project" value="InterPro"/>
</dbReference>
<dbReference type="GO" id="GO:0019843">
    <property type="term" value="F:rRNA binding"/>
    <property type="evidence" value="ECO:0007669"/>
    <property type="project" value="UniProtKB-UniRule"/>
</dbReference>
<dbReference type="GO" id="GO:0003735">
    <property type="term" value="F:structural constituent of ribosome"/>
    <property type="evidence" value="ECO:0007669"/>
    <property type="project" value="InterPro"/>
</dbReference>
<dbReference type="GO" id="GO:0042274">
    <property type="term" value="P:ribosomal small subunit biogenesis"/>
    <property type="evidence" value="ECO:0007669"/>
    <property type="project" value="TreeGrafter"/>
</dbReference>
<dbReference type="GO" id="GO:0006412">
    <property type="term" value="P:translation"/>
    <property type="evidence" value="ECO:0007669"/>
    <property type="project" value="UniProtKB-UniRule"/>
</dbReference>
<dbReference type="CDD" id="cd00165">
    <property type="entry name" value="S4"/>
    <property type="match status" value="1"/>
</dbReference>
<dbReference type="FunFam" id="1.10.1050.10:FF:000001">
    <property type="entry name" value="30S ribosomal protein S4"/>
    <property type="match status" value="1"/>
</dbReference>
<dbReference type="FunFam" id="3.10.290.10:FF:000001">
    <property type="entry name" value="30S ribosomal protein S4"/>
    <property type="match status" value="1"/>
</dbReference>
<dbReference type="Gene3D" id="1.10.1050.10">
    <property type="entry name" value="Ribosomal Protein S4 Delta 41, Chain A, domain 1"/>
    <property type="match status" value="1"/>
</dbReference>
<dbReference type="Gene3D" id="3.10.290.10">
    <property type="entry name" value="RNA-binding S4 domain"/>
    <property type="match status" value="1"/>
</dbReference>
<dbReference type="HAMAP" id="MF_01306_B">
    <property type="entry name" value="Ribosomal_uS4_B"/>
    <property type="match status" value="1"/>
</dbReference>
<dbReference type="InterPro" id="IPR022801">
    <property type="entry name" value="Ribosomal_uS4"/>
</dbReference>
<dbReference type="InterPro" id="IPR005709">
    <property type="entry name" value="Ribosomal_uS4_bac-type"/>
</dbReference>
<dbReference type="InterPro" id="IPR018079">
    <property type="entry name" value="Ribosomal_uS4_CS"/>
</dbReference>
<dbReference type="InterPro" id="IPR001912">
    <property type="entry name" value="Ribosomal_uS4_N"/>
</dbReference>
<dbReference type="InterPro" id="IPR002942">
    <property type="entry name" value="S4_RNA-bd"/>
</dbReference>
<dbReference type="InterPro" id="IPR036986">
    <property type="entry name" value="S4_RNA-bd_sf"/>
</dbReference>
<dbReference type="NCBIfam" id="NF003717">
    <property type="entry name" value="PRK05327.1"/>
    <property type="match status" value="1"/>
</dbReference>
<dbReference type="NCBIfam" id="TIGR01017">
    <property type="entry name" value="rpsD_bact"/>
    <property type="match status" value="1"/>
</dbReference>
<dbReference type="PANTHER" id="PTHR11831">
    <property type="entry name" value="30S 40S RIBOSOMAL PROTEIN"/>
    <property type="match status" value="1"/>
</dbReference>
<dbReference type="PANTHER" id="PTHR11831:SF4">
    <property type="entry name" value="SMALL RIBOSOMAL SUBUNIT PROTEIN US4M"/>
    <property type="match status" value="1"/>
</dbReference>
<dbReference type="Pfam" id="PF00163">
    <property type="entry name" value="Ribosomal_S4"/>
    <property type="match status" value="1"/>
</dbReference>
<dbReference type="Pfam" id="PF01479">
    <property type="entry name" value="S4"/>
    <property type="match status" value="1"/>
</dbReference>
<dbReference type="SMART" id="SM01390">
    <property type="entry name" value="Ribosomal_S4"/>
    <property type="match status" value="1"/>
</dbReference>
<dbReference type="SMART" id="SM00363">
    <property type="entry name" value="S4"/>
    <property type="match status" value="1"/>
</dbReference>
<dbReference type="SUPFAM" id="SSF55174">
    <property type="entry name" value="Alpha-L RNA-binding motif"/>
    <property type="match status" value="1"/>
</dbReference>
<dbReference type="PROSITE" id="PS00632">
    <property type="entry name" value="RIBOSOMAL_S4"/>
    <property type="match status" value="1"/>
</dbReference>
<dbReference type="PROSITE" id="PS50889">
    <property type="entry name" value="S4"/>
    <property type="match status" value="1"/>
</dbReference>
<protein>
    <recommendedName>
        <fullName evidence="1">Small ribosomal subunit protein uS4</fullName>
    </recommendedName>
    <alternativeName>
        <fullName evidence="2">30S ribosomal protein S4</fullName>
    </alternativeName>
</protein>
<name>RS4_ECOUT</name>
<sequence>MARYLGPKLKLSRREGTDLFLKSGVRAIDTKCKIEQAPGQHGARKPRLSDYGVQLREKQKVRRIYGVLERQFRNYYKEAARLKGNTGENLLALLEGRLDNVVYRMGFGATRAEARQLVSHKAIMVNGRVVNIASYQVSPNDVVSIREKAKKQSRVKAALELAEQREKPTWLEVDAGKMEGTFKRKPERSDLSADINEHLIVELYSK</sequence>
<feature type="chain" id="PRO_0000293277" description="Small ribosomal subunit protein uS4">
    <location>
        <begin position="1"/>
        <end position="206"/>
    </location>
</feature>
<feature type="domain" description="S4 RNA-binding" evidence="1">
    <location>
        <begin position="96"/>
        <end position="156"/>
    </location>
</feature>
<evidence type="ECO:0000255" key="1">
    <source>
        <dbReference type="HAMAP-Rule" id="MF_01306"/>
    </source>
</evidence>
<evidence type="ECO:0000305" key="2"/>
<reference key="1">
    <citation type="journal article" date="2006" name="Proc. Natl. Acad. Sci. U.S.A.">
        <title>Identification of genes subject to positive selection in uropathogenic strains of Escherichia coli: a comparative genomics approach.</title>
        <authorList>
            <person name="Chen S.L."/>
            <person name="Hung C.-S."/>
            <person name="Xu J."/>
            <person name="Reigstad C.S."/>
            <person name="Magrini V."/>
            <person name="Sabo A."/>
            <person name="Blasiar D."/>
            <person name="Bieri T."/>
            <person name="Meyer R.R."/>
            <person name="Ozersky P."/>
            <person name="Armstrong J.R."/>
            <person name="Fulton R.S."/>
            <person name="Latreille J.P."/>
            <person name="Spieth J."/>
            <person name="Hooton T.M."/>
            <person name="Mardis E.R."/>
            <person name="Hultgren S.J."/>
            <person name="Gordon J.I."/>
        </authorList>
    </citation>
    <scope>NUCLEOTIDE SEQUENCE [LARGE SCALE GENOMIC DNA]</scope>
    <source>
        <strain>UTI89 / UPEC</strain>
    </source>
</reference>
<comment type="function">
    <text evidence="1">One of the primary rRNA binding proteins, it binds directly to 16S rRNA where it nucleates assembly of the body of the 30S subunit.</text>
</comment>
<comment type="function">
    <text evidence="1">With S5 and S12 plays an important role in translational accuracy.</text>
</comment>
<comment type="subunit">
    <text evidence="1">Part of the 30S ribosomal subunit. Contacts protein S5. The interaction surface between S4 and S5 is involved in control of translational fidelity.</text>
</comment>
<comment type="similarity">
    <text evidence="1">Belongs to the universal ribosomal protein uS4 family.</text>
</comment>
<proteinExistence type="inferred from homology"/>
<organism>
    <name type="scientific">Escherichia coli (strain UTI89 / UPEC)</name>
    <dbReference type="NCBI Taxonomy" id="364106"/>
    <lineage>
        <taxon>Bacteria</taxon>
        <taxon>Pseudomonadati</taxon>
        <taxon>Pseudomonadota</taxon>
        <taxon>Gammaproteobacteria</taxon>
        <taxon>Enterobacterales</taxon>
        <taxon>Enterobacteriaceae</taxon>
        <taxon>Escherichia</taxon>
    </lineage>
</organism>